<feature type="chain" id="PRO_0000173739" description="Agmatinase">
    <location>
        <begin position="1"/>
        <end position="306"/>
    </location>
</feature>
<feature type="binding site" evidence="1">
    <location>
        <position position="126"/>
    </location>
    <ligand>
        <name>Mn(2+)</name>
        <dbReference type="ChEBI" id="CHEBI:29035"/>
    </ligand>
</feature>
<feature type="binding site" evidence="1">
    <location>
        <position position="149"/>
    </location>
    <ligand>
        <name>Mn(2+)</name>
        <dbReference type="ChEBI" id="CHEBI:29035"/>
    </ligand>
</feature>
<feature type="binding site" evidence="1">
    <location>
        <position position="151"/>
    </location>
    <ligand>
        <name>Mn(2+)</name>
        <dbReference type="ChEBI" id="CHEBI:29035"/>
    </ligand>
</feature>
<feature type="binding site" evidence="1">
    <location>
        <position position="153"/>
    </location>
    <ligand>
        <name>Mn(2+)</name>
        <dbReference type="ChEBI" id="CHEBI:29035"/>
    </ligand>
</feature>
<feature type="binding site" evidence="1">
    <location>
        <position position="230"/>
    </location>
    <ligand>
        <name>Mn(2+)</name>
        <dbReference type="ChEBI" id="CHEBI:29035"/>
    </ligand>
</feature>
<feature type="binding site" evidence="1">
    <location>
        <position position="232"/>
    </location>
    <ligand>
        <name>Mn(2+)</name>
        <dbReference type="ChEBI" id="CHEBI:29035"/>
    </ligand>
</feature>
<keyword id="KW-0378">Hydrolase</keyword>
<keyword id="KW-0464">Manganese</keyword>
<keyword id="KW-0479">Metal-binding</keyword>
<keyword id="KW-0620">Polyamine biosynthesis</keyword>
<keyword id="KW-0661">Putrescine biosynthesis</keyword>
<keyword id="KW-0745">Spermidine biosynthesis</keyword>
<organism>
    <name type="scientific">Salmonella choleraesuis (strain SC-B67)</name>
    <dbReference type="NCBI Taxonomy" id="321314"/>
    <lineage>
        <taxon>Bacteria</taxon>
        <taxon>Pseudomonadati</taxon>
        <taxon>Pseudomonadota</taxon>
        <taxon>Gammaproteobacteria</taxon>
        <taxon>Enterobacterales</taxon>
        <taxon>Enterobacteriaceae</taxon>
        <taxon>Salmonella</taxon>
    </lineage>
</organism>
<gene>
    <name evidence="1" type="primary">speB</name>
    <name type="ordered locus">SCH_3020</name>
</gene>
<evidence type="ECO:0000255" key="1">
    <source>
        <dbReference type="HAMAP-Rule" id="MF_01418"/>
    </source>
</evidence>
<accession>Q57K36</accession>
<name>SPEB_SALCH</name>
<reference key="1">
    <citation type="journal article" date="2005" name="Nucleic Acids Res.">
        <title>The genome sequence of Salmonella enterica serovar Choleraesuis, a highly invasive and resistant zoonotic pathogen.</title>
        <authorList>
            <person name="Chiu C.-H."/>
            <person name="Tang P."/>
            <person name="Chu C."/>
            <person name="Hu S."/>
            <person name="Bao Q."/>
            <person name="Yu J."/>
            <person name="Chou Y.-Y."/>
            <person name="Wang H.-S."/>
            <person name="Lee Y.-S."/>
        </authorList>
    </citation>
    <scope>NUCLEOTIDE SEQUENCE [LARGE SCALE GENOMIC DNA]</scope>
    <source>
        <strain>SC-B67</strain>
    </source>
</reference>
<sequence length="306" mass="33603">MSTLGHQYDNSLVSNAFGFLRLPMNFQPYDSDADWVITGVPFDMATSGRAGGRHGPAAIRQVSTNLAWEHHRFPWNFDMRERLNVVDCGDLVYAFGDAREMSEKLQAHAEKLLSAGKRMLSFGGDHFVTLPLLRAHAKHFGKMALVHFDAHTDTYANGCEFDHGTMFYTAPKEGLIDPHHSVQIGIRTEFDKDNGFTVLDACQVNDRGVDDILAQVKQIVGDMPVYLTFDIDCLDPAFAPGTGTPVIGGLTSDRAIKLVRGLKDLNIVGMDVVEVAPAYDQSEITALAAATLALEMLYIQAAKKGE</sequence>
<dbReference type="EC" id="3.5.3.11" evidence="1"/>
<dbReference type="EMBL" id="AE017220">
    <property type="protein sequence ID" value="AAX66926.1"/>
    <property type="molecule type" value="Genomic_DNA"/>
</dbReference>
<dbReference type="RefSeq" id="WP_000105550.1">
    <property type="nucleotide sequence ID" value="NC_006905.1"/>
</dbReference>
<dbReference type="SMR" id="Q57K36"/>
<dbReference type="KEGG" id="sec:SCH_3020"/>
<dbReference type="HOGENOM" id="CLU_039478_0_0_6"/>
<dbReference type="UniPathway" id="UPA00534">
    <property type="reaction ID" value="UER00287"/>
</dbReference>
<dbReference type="Proteomes" id="UP000000538">
    <property type="component" value="Chromosome"/>
</dbReference>
<dbReference type="GO" id="GO:0008783">
    <property type="term" value="F:agmatinase activity"/>
    <property type="evidence" value="ECO:0007669"/>
    <property type="project" value="UniProtKB-UniRule"/>
</dbReference>
<dbReference type="GO" id="GO:0030145">
    <property type="term" value="F:manganese ion binding"/>
    <property type="evidence" value="ECO:0007669"/>
    <property type="project" value="InterPro"/>
</dbReference>
<dbReference type="GO" id="GO:0033389">
    <property type="term" value="P:putrescine biosynthetic process from arginine, via agmatine"/>
    <property type="evidence" value="ECO:0007669"/>
    <property type="project" value="TreeGrafter"/>
</dbReference>
<dbReference type="GO" id="GO:0008295">
    <property type="term" value="P:spermidine biosynthetic process"/>
    <property type="evidence" value="ECO:0007669"/>
    <property type="project" value="UniProtKB-UniRule"/>
</dbReference>
<dbReference type="CDD" id="cd11592">
    <property type="entry name" value="Agmatinase_PAH"/>
    <property type="match status" value="1"/>
</dbReference>
<dbReference type="FunFam" id="3.40.800.10:FF:000001">
    <property type="entry name" value="Agmatinase"/>
    <property type="match status" value="1"/>
</dbReference>
<dbReference type="Gene3D" id="3.40.800.10">
    <property type="entry name" value="Ureohydrolase domain"/>
    <property type="match status" value="1"/>
</dbReference>
<dbReference type="HAMAP" id="MF_01418">
    <property type="entry name" value="SpeB"/>
    <property type="match status" value="1"/>
</dbReference>
<dbReference type="InterPro" id="IPR023694">
    <property type="entry name" value="Agmatinase"/>
</dbReference>
<dbReference type="InterPro" id="IPR005925">
    <property type="entry name" value="Agmatinase-rel"/>
</dbReference>
<dbReference type="InterPro" id="IPR006035">
    <property type="entry name" value="Ureohydrolase"/>
</dbReference>
<dbReference type="InterPro" id="IPR023696">
    <property type="entry name" value="Ureohydrolase_dom_sf"/>
</dbReference>
<dbReference type="InterPro" id="IPR020855">
    <property type="entry name" value="Ureohydrolase_Mn_BS"/>
</dbReference>
<dbReference type="NCBIfam" id="TIGR01230">
    <property type="entry name" value="agmatinase"/>
    <property type="match status" value="1"/>
</dbReference>
<dbReference type="NCBIfam" id="NF002564">
    <property type="entry name" value="PRK02190.1"/>
    <property type="match status" value="1"/>
</dbReference>
<dbReference type="PANTHER" id="PTHR11358">
    <property type="entry name" value="ARGINASE/AGMATINASE"/>
    <property type="match status" value="1"/>
</dbReference>
<dbReference type="PANTHER" id="PTHR11358:SF26">
    <property type="entry name" value="GUANIDINO ACID HYDROLASE, MITOCHONDRIAL"/>
    <property type="match status" value="1"/>
</dbReference>
<dbReference type="Pfam" id="PF00491">
    <property type="entry name" value="Arginase"/>
    <property type="match status" value="1"/>
</dbReference>
<dbReference type="PIRSF" id="PIRSF036979">
    <property type="entry name" value="Arginase"/>
    <property type="match status" value="1"/>
</dbReference>
<dbReference type="SUPFAM" id="SSF52768">
    <property type="entry name" value="Arginase/deacetylase"/>
    <property type="match status" value="1"/>
</dbReference>
<dbReference type="PROSITE" id="PS01053">
    <property type="entry name" value="ARGINASE_1"/>
    <property type="match status" value="1"/>
</dbReference>
<dbReference type="PROSITE" id="PS51409">
    <property type="entry name" value="ARGINASE_2"/>
    <property type="match status" value="1"/>
</dbReference>
<comment type="function">
    <text evidence="1">Catalyzes the formation of putrescine from agmatine.</text>
</comment>
<comment type="catalytic activity">
    <reaction evidence="1">
        <text>agmatine + H2O = urea + putrescine</text>
        <dbReference type="Rhea" id="RHEA:13929"/>
        <dbReference type="ChEBI" id="CHEBI:15377"/>
        <dbReference type="ChEBI" id="CHEBI:16199"/>
        <dbReference type="ChEBI" id="CHEBI:58145"/>
        <dbReference type="ChEBI" id="CHEBI:326268"/>
        <dbReference type="EC" id="3.5.3.11"/>
    </reaction>
</comment>
<comment type="cofactor">
    <cofactor evidence="1">
        <name>Mn(2+)</name>
        <dbReference type="ChEBI" id="CHEBI:29035"/>
    </cofactor>
</comment>
<comment type="pathway">
    <text evidence="1">Amine and polyamine biosynthesis; putrescine biosynthesis via agmatine pathway; putrescine from agmatine: step 1/1.</text>
</comment>
<comment type="similarity">
    <text evidence="1">Belongs to the arginase family. Agmatinase subfamily.</text>
</comment>
<protein>
    <recommendedName>
        <fullName evidence="1">Agmatinase</fullName>
        <ecNumber evidence="1">3.5.3.11</ecNumber>
    </recommendedName>
    <alternativeName>
        <fullName evidence="1">Agmatine ureohydrolase</fullName>
        <shortName evidence="1">AUH</shortName>
    </alternativeName>
</protein>
<proteinExistence type="inferred from homology"/>